<evidence type="ECO:0000255" key="1"/>
<evidence type="ECO:0000255" key="2">
    <source>
        <dbReference type="PROSITE-ProRule" id="PRU00521"/>
    </source>
</evidence>
<evidence type="ECO:0000305" key="3"/>
<sequence length="308" mass="34287">MPTLSFWVCSATPVSPGFFALILLVFVTSIASNVVKIILIHIDSRLHTPMYFLLSQLSLRDILYISTIVPKMLVDQVMSQRAISFAGCTAQHFLYLTLAGAEFFLLGLMSCDRYVAICNPLHYPDLMSRKICWLIVAAAWLGGSIDGFLLTPVTMQFPFCASREINHFFCEVPALLKLSCTDTSAYETAMYVCCIMMLLIPFSVISGSYTRILITVYRMSEAEGRRKAVATCSSHMVVVSLFYGAAMYTYVLPHSYHTPEQDKAVSAFYTILTPMLNPLIYSLRNKDVTGALQKVVGRCVSSGKVTTF</sequence>
<dbReference type="EMBL" id="AC138089">
    <property type="status" value="NOT_ANNOTATED_CDS"/>
    <property type="molecule type" value="Genomic_DNA"/>
</dbReference>
<dbReference type="EMBL" id="AF399480">
    <property type="status" value="NOT_ANNOTATED_CDS"/>
    <property type="molecule type" value="Genomic_DNA"/>
</dbReference>
<dbReference type="EMBL" id="BK004622">
    <property type="status" value="NOT_ANNOTATED_CDS"/>
    <property type="molecule type" value="Genomic_DNA"/>
</dbReference>
<dbReference type="SMR" id="P0C7T2"/>
<dbReference type="FunCoup" id="P0C7T2">
    <property type="interactions" value="588"/>
</dbReference>
<dbReference type="iPTMnet" id="P0C7T2"/>
<dbReference type="PhosphoSitePlus" id="P0C7T2"/>
<dbReference type="BioMuta" id="OR2T7"/>
<dbReference type="DMDM" id="206557832"/>
<dbReference type="MassIVE" id="P0C7T2"/>
<dbReference type="PaxDb" id="9606-ENSP00000475521"/>
<dbReference type="Ensembl" id="ENST00000626837.1">
    <property type="protein sequence ID" value="ENSP00000486110.1"/>
    <property type="gene ID" value="ENSG00000281395.1"/>
</dbReference>
<dbReference type="Ensembl" id="ENST00000626892.1">
    <property type="protein sequence ID" value="ENSP00000486319.1"/>
    <property type="gene ID" value="ENSG00000281489.1"/>
</dbReference>
<dbReference type="UCSC" id="uc057rbc.1">
    <property type="organism name" value="human"/>
</dbReference>
<dbReference type="AGR" id="HGNC:15019"/>
<dbReference type="GeneCards" id="OR2T7"/>
<dbReference type="HGNC" id="HGNC:15019">
    <property type="gene designation" value="OR2T7"/>
</dbReference>
<dbReference type="neXtProt" id="NX_P0C7T2"/>
<dbReference type="eggNOG" id="ENOG502SMQD">
    <property type="taxonomic scope" value="Eukaryota"/>
</dbReference>
<dbReference type="InParanoid" id="P0C7T2"/>
<dbReference type="OrthoDB" id="10017003at2759"/>
<dbReference type="PAN-GO" id="P0C7T2">
    <property type="GO annotations" value="0 GO annotations based on evolutionary models"/>
</dbReference>
<dbReference type="PhylomeDB" id="P0C7T2"/>
<dbReference type="PathwayCommons" id="P0C7T2"/>
<dbReference type="Reactome" id="R-HSA-9752946">
    <property type="pathway name" value="Expression and translocation of olfactory receptors"/>
</dbReference>
<dbReference type="Pharos" id="P0C7T2">
    <property type="development level" value="Tdark"/>
</dbReference>
<dbReference type="PRO" id="PR:P0C7T2"/>
<dbReference type="Proteomes" id="UP000005640">
    <property type="component" value="Unplaced"/>
</dbReference>
<dbReference type="RNAct" id="P0C7T2">
    <property type="molecule type" value="protein"/>
</dbReference>
<dbReference type="GO" id="GO:0005886">
    <property type="term" value="C:plasma membrane"/>
    <property type="evidence" value="ECO:0000318"/>
    <property type="project" value="GO_Central"/>
</dbReference>
<dbReference type="GO" id="GO:0004930">
    <property type="term" value="F:G protein-coupled receptor activity"/>
    <property type="evidence" value="ECO:0007669"/>
    <property type="project" value="UniProtKB-KW"/>
</dbReference>
<dbReference type="GO" id="GO:0004984">
    <property type="term" value="F:olfactory receptor activity"/>
    <property type="evidence" value="ECO:0000318"/>
    <property type="project" value="GO_Central"/>
</dbReference>
<dbReference type="GO" id="GO:0050911">
    <property type="term" value="P:detection of chemical stimulus involved in sensory perception of smell"/>
    <property type="evidence" value="ECO:0000318"/>
    <property type="project" value="GO_Central"/>
</dbReference>
<dbReference type="CDD" id="cd15421">
    <property type="entry name" value="7tmA_OR2T-like"/>
    <property type="match status" value="1"/>
</dbReference>
<dbReference type="FunFam" id="1.20.1070.10:FF:000008">
    <property type="entry name" value="Olfactory receptor"/>
    <property type="match status" value="1"/>
</dbReference>
<dbReference type="Gene3D" id="1.20.1070.10">
    <property type="entry name" value="Rhodopsin 7-helix transmembrane proteins"/>
    <property type="match status" value="1"/>
</dbReference>
<dbReference type="InterPro" id="IPR000276">
    <property type="entry name" value="GPCR_Rhodpsn"/>
</dbReference>
<dbReference type="InterPro" id="IPR017452">
    <property type="entry name" value="GPCR_Rhodpsn_7TM"/>
</dbReference>
<dbReference type="InterPro" id="IPR000725">
    <property type="entry name" value="Olfact_rcpt"/>
</dbReference>
<dbReference type="PANTHER" id="PTHR26453">
    <property type="entry name" value="OLFACTORY RECEPTOR"/>
    <property type="match status" value="1"/>
</dbReference>
<dbReference type="Pfam" id="PF13853">
    <property type="entry name" value="7tm_4"/>
    <property type="match status" value="1"/>
</dbReference>
<dbReference type="PRINTS" id="PR00237">
    <property type="entry name" value="GPCRRHODOPSN"/>
</dbReference>
<dbReference type="PRINTS" id="PR00245">
    <property type="entry name" value="OLFACTORYR"/>
</dbReference>
<dbReference type="SUPFAM" id="SSF81321">
    <property type="entry name" value="Family A G protein-coupled receptor-like"/>
    <property type="match status" value="1"/>
</dbReference>
<dbReference type="PROSITE" id="PS00237">
    <property type="entry name" value="G_PROTEIN_RECEP_F1_1"/>
    <property type="match status" value="1"/>
</dbReference>
<dbReference type="PROSITE" id="PS50262">
    <property type="entry name" value="G_PROTEIN_RECEP_F1_2"/>
    <property type="match status" value="1"/>
</dbReference>
<name>OR2T7_HUMAN</name>
<protein>
    <recommendedName>
        <fullName>Olfactory receptor 2T7</fullName>
    </recommendedName>
    <alternativeName>
        <fullName>OST723</fullName>
    </alternativeName>
    <alternativeName>
        <fullName>olfactory receptor OR1-44</fullName>
    </alternativeName>
</protein>
<accession>P0C7T2</accession>
<gene>
    <name type="primary">OR2T7</name>
    <name type="synonym">OR2T7P</name>
</gene>
<proteinExistence type="inferred from homology"/>
<organism>
    <name type="scientific">Homo sapiens</name>
    <name type="common">Human</name>
    <dbReference type="NCBI Taxonomy" id="9606"/>
    <lineage>
        <taxon>Eukaryota</taxon>
        <taxon>Metazoa</taxon>
        <taxon>Chordata</taxon>
        <taxon>Craniata</taxon>
        <taxon>Vertebrata</taxon>
        <taxon>Euteleostomi</taxon>
        <taxon>Mammalia</taxon>
        <taxon>Eutheria</taxon>
        <taxon>Euarchontoglires</taxon>
        <taxon>Primates</taxon>
        <taxon>Haplorrhini</taxon>
        <taxon>Catarrhini</taxon>
        <taxon>Hominidae</taxon>
        <taxon>Homo</taxon>
    </lineage>
</organism>
<keyword id="KW-1003">Cell membrane</keyword>
<keyword id="KW-1015">Disulfide bond</keyword>
<keyword id="KW-0297">G-protein coupled receptor</keyword>
<keyword id="KW-0472">Membrane</keyword>
<keyword id="KW-0552">Olfaction</keyword>
<keyword id="KW-0675">Receptor</keyword>
<keyword id="KW-1185">Reference proteome</keyword>
<keyword id="KW-0716">Sensory transduction</keyword>
<keyword id="KW-0807">Transducer</keyword>
<keyword id="KW-0812">Transmembrane</keyword>
<keyword id="KW-1133">Transmembrane helix</keyword>
<reference key="1">
    <citation type="journal article" date="2006" name="Nature">
        <title>The DNA sequence and biological annotation of human chromosome 1.</title>
        <authorList>
            <person name="Gregory S.G."/>
            <person name="Barlow K.F."/>
            <person name="McLay K.E."/>
            <person name="Kaul R."/>
            <person name="Swarbreck D."/>
            <person name="Dunham A."/>
            <person name="Scott C.E."/>
            <person name="Howe K.L."/>
            <person name="Woodfine K."/>
            <person name="Spencer C.C.A."/>
            <person name="Jones M.C."/>
            <person name="Gillson C."/>
            <person name="Searle S."/>
            <person name="Zhou Y."/>
            <person name="Kokocinski F."/>
            <person name="McDonald L."/>
            <person name="Evans R."/>
            <person name="Phillips K."/>
            <person name="Atkinson A."/>
            <person name="Cooper R."/>
            <person name="Jones C."/>
            <person name="Hall R.E."/>
            <person name="Andrews T.D."/>
            <person name="Lloyd C."/>
            <person name="Ainscough R."/>
            <person name="Almeida J.P."/>
            <person name="Ambrose K.D."/>
            <person name="Anderson F."/>
            <person name="Andrew R.W."/>
            <person name="Ashwell R.I.S."/>
            <person name="Aubin K."/>
            <person name="Babbage A.K."/>
            <person name="Bagguley C.L."/>
            <person name="Bailey J."/>
            <person name="Beasley H."/>
            <person name="Bethel G."/>
            <person name="Bird C.P."/>
            <person name="Bray-Allen S."/>
            <person name="Brown J.Y."/>
            <person name="Brown A.J."/>
            <person name="Buckley D."/>
            <person name="Burton J."/>
            <person name="Bye J."/>
            <person name="Carder C."/>
            <person name="Chapman J.C."/>
            <person name="Clark S.Y."/>
            <person name="Clarke G."/>
            <person name="Clee C."/>
            <person name="Cobley V."/>
            <person name="Collier R.E."/>
            <person name="Corby N."/>
            <person name="Coville G.J."/>
            <person name="Davies J."/>
            <person name="Deadman R."/>
            <person name="Dunn M."/>
            <person name="Earthrowl M."/>
            <person name="Ellington A.G."/>
            <person name="Errington H."/>
            <person name="Frankish A."/>
            <person name="Frankland J."/>
            <person name="French L."/>
            <person name="Garner P."/>
            <person name="Garnett J."/>
            <person name="Gay L."/>
            <person name="Ghori M.R.J."/>
            <person name="Gibson R."/>
            <person name="Gilby L.M."/>
            <person name="Gillett W."/>
            <person name="Glithero R.J."/>
            <person name="Grafham D.V."/>
            <person name="Griffiths C."/>
            <person name="Griffiths-Jones S."/>
            <person name="Grocock R."/>
            <person name="Hammond S."/>
            <person name="Harrison E.S.I."/>
            <person name="Hart E."/>
            <person name="Haugen E."/>
            <person name="Heath P.D."/>
            <person name="Holmes S."/>
            <person name="Holt K."/>
            <person name="Howden P.J."/>
            <person name="Hunt A.R."/>
            <person name="Hunt S.E."/>
            <person name="Hunter G."/>
            <person name="Isherwood J."/>
            <person name="James R."/>
            <person name="Johnson C."/>
            <person name="Johnson D."/>
            <person name="Joy A."/>
            <person name="Kay M."/>
            <person name="Kershaw J.K."/>
            <person name="Kibukawa M."/>
            <person name="Kimberley A.M."/>
            <person name="King A."/>
            <person name="Knights A.J."/>
            <person name="Lad H."/>
            <person name="Laird G."/>
            <person name="Lawlor S."/>
            <person name="Leongamornlert D.A."/>
            <person name="Lloyd D.M."/>
            <person name="Loveland J."/>
            <person name="Lovell J."/>
            <person name="Lush M.J."/>
            <person name="Lyne R."/>
            <person name="Martin S."/>
            <person name="Mashreghi-Mohammadi M."/>
            <person name="Matthews L."/>
            <person name="Matthews N.S.W."/>
            <person name="McLaren S."/>
            <person name="Milne S."/>
            <person name="Mistry S."/>
            <person name="Moore M.J.F."/>
            <person name="Nickerson T."/>
            <person name="O'Dell C.N."/>
            <person name="Oliver K."/>
            <person name="Palmeiri A."/>
            <person name="Palmer S.A."/>
            <person name="Parker A."/>
            <person name="Patel D."/>
            <person name="Pearce A.V."/>
            <person name="Peck A.I."/>
            <person name="Pelan S."/>
            <person name="Phelps K."/>
            <person name="Phillimore B.J."/>
            <person name="Plumb R."/>
            <person name="Rajan J."/>
            <person name="Raymond C."/>
            <person name="Rouse G."/>
            <person name="Saenphimmachak C."/>
            <person name="Sehra H.K."/>
            <person name="Sheridan E."/>
            <person name="Shownkeen R."/>
            <person name="Sims S."/>
            <person name="Skuce C.D."/>
            <person name="Smith M."/>
            <person name="Steward C."/>
            <person name="Subramanian S."/>
            <person name="Sycamore N."/>
            <person name="Tracey A."/>
            <person name="Tromans A."/>
            <person name="Van Helmond Z."/>
            <person name="Wall M."/>
            <person name="Wallis J.M."/>
            <person name="White S."/>
            <person name="Whitehead S.L."/>
            <person name="Wilkinson J.E."/>
            <person name="Willey D.L."/>
            <person name="Williams H."/>
            <person name="Wilming L."/>
            <person name="Wray P.W."/>
            <person name="Wu Z."/>
            <person name="Coulson A."/>
            <person name="Vaudin M."/>
            <person name="Sulston J.E."/>
            <person name="Durbin R.M."/>
            <person name="Hubbard T."/>
            <person name="Wooster R."/>
            <person name="Dunham I."/>
            <person name="Carter N.P."/>
            <person name="McVean G."/>
            <person name="Ross M.T."/>
            <person name="Harrow J."/>
            <person name="Olson M.V."/>
            <person name="Beck S."/>
            <person name="Rogers J."/>
            <person name="Bentley D.R."/>
        </authorList>
    </citation>
    <scope>NUCLEOTIDE SEQUENCE [LARGE SCALE GENOMIC DNA]</scope>
</reference>
<reference key="2">
    <citation type="journal article" date="2002" name="Genomics">
        <title>DEFOG: a practical scheme for deciphering families of genes.</title>
        <authorList>
            <person name="Fuchs T."/>
            <person name="Malecova B."/>
            <person name="Linhart C."/>
            <person name="Sharan R."/>
            <person name="Khen M."/>
            <person name="Herwig R."/>
            <person name="Shmulevich D."/>
            <person name="Elkon R."/>
            <person name="Steinfath M."/>
            <person name="O'Brien J.K."/>
            <person name="Radelof U."/>
            <person name="Lehrach H."/>
            <person name="Lancet D."/>
            <person name="Shamir R."/>
        </authorList>
    </citation>
    <scope>NUCLEOTIDE SEQUENCE [GENOMIC DNA] OF 59-274</scope>
</reference>
<reference key="3">
    <citation type="journal article" date="2004" name="Proc. Natl. Acad. Sci. U.S.A.">
        <title>The human olfactory receptor gene family.</title>
        <authorList>
            <person name="Malnic B."/>
            <person name="Godfrey P.A."/>
            <person name="Buck L.B."/>
        </authorList>
    </citation>
    <scope>IDENTIFICATION</scope>
</reference>
<reference key="4">
    <citation type="journal article" date="2004" name="Proc. Natl. Acad. Sci. U.S.A.">
        <authorList>
            <person name="Malnic B."/>
            <person name="Godfrey P.A."/>
            <person name="Buck L.B."/>
        </authorList>
    </citation>
    <scope>ERRATUM OF PUBMED:14983052</scope>
</reference>
<comment type="function">
    <text evidence="3">Odorant receptor.</text>
</comment>
<comment type="subcellular location">
    <subcellularLocation>
        <location>Cell membrane</location>
        <topology>Multi-pass membrane protein</topology>
    </subcellularLocation>
</comment>
<comment type="similarity">
    <text evidence="2">Belongs to the G-protein coupled receptor 1 family.</text>
</comment>
<comment type="online information" name="Human Olfactory Receptor Data Exploratorium (HORDE)">
    <link uri="http://genome.weizmann.ac.il/horde/card/index/symbol:OR2T7"/>
</comment>
<feature type="chain" id="PRO_0000343672" description="Olfactory receptor 2T7">
    <location>
        <begin position="1"/>
        <end position="308"/>
    </location>
</feature>
<feature type="topological domain" description="Extracellular" evidence="1">
    <location>
        <begin position="1"/>
        <end position="17"/>
    </location>
</feature>
<feature type="transmembrane region" description="Helical; Name=1" evidence="1">
    <location>
        <begin position="18"/>
        <end position="40"/>
    </location>
</feature>
<feature type="topological domain" description="Cytoplasmic" evidence="1">
    <location>
        <begin position="41"/>
        <end position="51"/>
    </location>
</feature>
<feature type="transmembrane region" description="Helical; Name=2" evidence="1">
    <location>
        <begin position="52"/>
        <end position="74"/>
    </location>
</feature>
<feature type="topological domain" description="Extracellular" evidence="1">
    <location>
        <begin position="75"/>
        <end position="88"/>
    </location>
</feature>
<feature type="transmembrane region" description="Helical; Name=3" evidence="1">
    <location>
        <begin position="89"/>
        <end position="109"/>
    </location>
</feature>
<feature type="topological domain" description="Cytoplasmic" evidence="1">
    <location>
        <begin position="110"/>
        <end position="130"/>
    </location>
</feature>
<feature type="transmembrane region" description="Helical; Name=4" evidence="1">
    <location>
        <begin position="131"/>
        <end position="151"/>
    </location>
</feature>
<feature type="topological domain" description="Extracellular" evidence="1">
    <location>
        <begin position="152"/>
        <end position="188"/>
    </location>
</feature>
<feature type="transmembrane region" description="Helical; Name=5" evidence="1">
    <location>
        <begin position="189"/>
        <end position="209"/>
    </location>
</feature>
<feature type="topological domain" description="Cytoplasmic" evidence="1">
    <location>
        <begin position="210"/>
        <end position="235"/>
    </location>
</feature>
<feature type="transmembrane region" description="Helical; Name=6" evidence="1">
    <location>
        <begin position="236"/>
        <end position="256"/>
    </location>
</feature>
<feature type="topological domain" description="Extracellular" evidence="1">
    <location>
        <begin position="257"/>
        <end position="262"/>
    </location>
</feature>
<feature type="transmembrane region" description="Helical; Name=7" evidence="1">
    <location>
        <begin position="263"/>
        <end position="283"/>
    </location>
</feature>
<feature type="topological domain" description="Cytoplasmic" evidence="1">
    <location>
        <begin position="284"/>
        <end position="308"/>
    </location>
</feature>
<feature type="disulfide bond" evidence="2">
    <location>
        <begin position="88"/>
        <end position="170"/>
    </location>
</feature>
<feature type="sequence conflict" description="In Ref. 2; AF399480." evidence="3" ref="2">
    <original>D</original>
    <variation>N</variation>
    <location>
        <position position="146"/>
    </location>
</feature>
<feature type="sequence conflict" description="In Ref. 2; AF399480." evidence="3" ref="2">
    <original>M</original>
    <variation>T</variation>
    <location>
        <position position="155"/>
    </location>
</feature>